<keyword id="KW-0235">DNA replication</keyword>
<keyword id="KW-0238">DNA-binding</keyword>
<keyword id="KW-0639">Primosome</keyword>
<keyword id="KW-1185">Reference proteome</keyword>
<sequence length="179" mass="19455">MSSRVLTPDVVGIDALVHDHQTVLAKAEGGVVAVFANNAPAFYAVTPARLAELLALEEKLARPGSDVALDDQLYQEPQAAPVAVPMGKFAMYPDWQPDADFIRLAALWGVALREPVTTEELASFIAYWQAEGKVFHHVQWQQKLARSLQIGRASNGGLPKRDVNTVSEPDSQIPPGFRG</sequence>
<comment type="function">
    <text evidence="1">Involved in the restart of stalled replication forks, which reloads the replicative helicase on sites other than the origin of replication. Can function in multiple replication restart pathways. Displaces ssDNA from a PriB-ssDNA complex. Probably forms a spiral filament on ssDNA.</text>
</comment>
<comment type="subunit">
    <text evidence="1">Homooligomerizes. Interacts with PriB. Component of the replication restart primosome. Primosome assembly occurs via a 'hand-off' mechanism. PriA binds to replication forks, subsequently PriB then DnaT bind; DnaT then displaces ssDNA to generate the helicase loading substrate.</text>
</comment>
<comment type="similarity">
    <text evidence="1">Belongs to the DnaT family.</text>
</comment>
<evidence type="ECO:0000255" key="1">
    <source>
        <dbReference type="HAMAP-Rule" id="MF_01061"/>
    </source>
</evidence>
<evidence type="ECO:0000256" key="2">
    <source>
        <dbReference type="SAM" id="MobiDB-lite"/>
    </source>
</evidence>
<reference key="1">
    <citation type="journal article" date="2009" name="PLoS Genet.">
        <title>Organised genome dynamics in the Escherichia coli species results in highly diverse adaptive paths.</title>
        <authorList>
            <person name="Touchon M."/>
            <person name="Hoede C."/>
            <person name="Tenaillon O."/>
            <person name="Barbe V."/>
            <person name="Baeriswyl S."/>
            <person name="Bidet P."/>
            <person name="Bingen E."/>
            <person name="Bonacorsi S."/>
            <person name="Bouchier C."/>
            <person name="Bouvet O."/>
            <person name="Calteau A."/>
            <person name="Chiapello H."/>
            <person name="Clermont O."/>
            <person name="Cruveiller S."/>
            <person name="Danchin A."/>
            <person name="Diard M."/>
            <person name="Dossat C."/>
            <person name="Karoui M.E."/>
            <person name="Frapy E."/>
            <person name="Garry L."/>
            <person name="Ghigo J.M."/>
            <person name="Gilles A.M."/>
            <person name="Johnson J."/>
            <person name="Le Bouguenec C."/>
            <person name="Lescat M."/>
            <person name="Mangenot S."/>
            <person name="Martinez-Jehanne V."/>
            <person name="Matic I."/>
            <person name="Nassif X."/>
            <person name="Oztas S."/>
            <person name="Petit M.A."/>
            <person name="Pichon C."/>
            <person name="Rouy Z."/>
            <person name="Ruf C.S."/>
            <person name="Schneider D."/>
            <person name="Tourret J."/>
            <person name="Vacherie B."/>
            <person name="Vallenet D."/>
            <person name="Medigue C."/>
            <person name="Rocha E.P.C."/>
            <person name="Denamur E."/>
        </authorList>
    </citation>
    <scope>NUCLEOTIDE SEQUENCE [LARGE SCALE GENOMIC DNA]</scope>
    <source>
        <strain>55989 / EAEC</strain>
    </source>
</reference>
<feature type="chain" id="PRO_1000149690" description="Replication restart protein DnaT">
    <location>
        <begin position="1"/>
        <end position="179"/>
    </location>
</feature>
<feature type="region of interest" description="Disordered" evidence="2">
    <location>
        <begin position="156"/>
        <end position="179"/>
    </location>
</feature>
<organism>
    <name type="scientific">Escherichia coli (strain 55989 / EAEC)</name>
    <dbReference type="NCBI Taxonomy" id="585055"/>
    <lineage>
        <taxon>Bacteria</taxon>
        <taxon>Pseudomonadati</taxon>
        <taxon>Pseudomonadota</taxon>
        <taxon>Gammaproteobacteria</taxon>
        <taxon>Enterobacterales</taxon>
        <taxon>Enterobacteriaceae</taxon>
        <taxon>Escherichia</taxon>
    </lineage>
</organism>
<accession>B7LEK9</accession>
<name>DNAT_ECO55</name>
<gene>
    <name evidence="1" type="primary">dnaT</name>
    <name type="ordered locus">EC55989_5024</name>
</gene>
<protein>
    <recommendedName>
        <fullName evidence="1">Replication restart protein DnaT</fullName>
    </recommendedName>
</protein>
<proteinExistence type="inferred from homology"/>
<dbReference type="EMBL" id="CU928145">
    <property type="protein sequence ID" value="CAV02149.1"/>
    <property type="molecule type" value="Genomic_DNA"/>
</dbReference>
<dbReference type="RefSeq" id="WP_000098818.1">
    <property type="nucleotide sequence ID" value="NZ_CP028304.1"/>
</dbReference>
<dbReference type="SMR" id="B7LEK9"/>
<dbReference type="GeneID" id="93777486"/>
<dbReference type="KEGG" id="eck:EC55989_5024"/>
<dbReference type="HOGENOM" id="CLU_1501592_0_0_6"/>
<dbReference type="Proteomes" id="UP000000746">
    <property type="component" value="Chromosome"/>
</dbReference>
<dbReference type="GO" id="GO:1990077">
    <property type="term" value="C:primosome complex"/>
    <property type="evidence" value="ECO:0007669"/>
    <property type="project" value="UniProtKB-KW"/>
</dbReference>
<dbReference type="GO" id="GO:0006269">
    <property type="term" value="P:DNA replication, synthesis of primer"/>
    <property type="evidence" value="ECO:0007669"/>
    <property type="project" value="UniProtKB-UniRule"/>
</dbReference>
<dbReference type="FunFam" id="1.10.8.1180:FF:000001">
    <property type="entry name" value="Primosomal protein 1"/>
    <property type="match status" value="1"/>
</dbReference>
<dbReference type="Gene3D" id="1.10.8.1180">
    <property type="match status" value="1"/>
</dbReference>
<dbReference type="HAMAP" id="MF_01061">
    <property type="entry name" value="DnaT"/>
    <property type="match status" value="1"/>
</dbReference>
<dbReference type="InterPro" id="IPR020917">
    <property type="entry name" value="DnaT"/>
</dbReference>
<dbReference type="InterPro" id="IPR040480">
    <property type="entry name" value="DnaT_DNA_bind"/>
</dbReference>
<dbReference type="NCBIfam" id="NF002770">
    <property type="entry name" value="PRK02854.1"/>
    <property type="match status" value="1"/>
</dbReference>
<dbReference type="Pfam" id="PF17948">
    <property type="entry name" value="DnaT"/>
    <property type="match status" value="1"/>
</dbReference>